<organismHost>
    <name type="scientific">Acanthamoeba polyphaga</name>
    <name type="common">Amoeba</name>
    <dbReference type="NCBI Taxonomy" id="5757"/>
</organismHost>
<gene>
    <name type="ordered locus">MIMI_R342</name>
</gene>
<reference key="1">
    <citation type="journal article" date="2004" name="Science">
        <title>The 1.2-megabase genome sequence of Mimivirus.</title>
        <authorList>
            <person name="Raoult D."/>
            <person name="Audic S."/>
            <person name="Robert C."/>
            <person name="Abergel C."/>
            <person name="Renesto P."/>
            <person name="Ogata H."/>
            <person name="La Scola B."/>
            <person name="Susan M."/>
            <person name="Claverie J.-M."/>
        </authorList>
    </citation>
    <scope>NUCLEOTIDE SEQUENCE [LARGE SCALE GENOMIC DNA]</scope>
    <source>
        <strain>Rowbotham-Bradford</strain>
    </source>
</reference>
<proteinExistence type="predicted"/>
<sequence>MQIMDYQFPYCSYPYNFSDKIKFCIGKIVCKTFDVIGIKIYSKITGIYLEPEKISSYNLSDTNHQISNEKNLIYSNIKWLIVGITIIPTIYYGTKLQYIPESKLWYIGTPLVFMNLFNTLSHICQYIQLKLHTDKLKHNIEITNSLENPICILDSIDYDSIISTRKLIWSTTKVNHNYVVYNAFYSDLFFVFDREKMLNDFILEKLSKLSENDIDCLANDPSRNRLVQQMQDEFIRNKLYLLLMQCYRHQYTNSS</sequence>
<keyword id="KW-0325">Glycoprotein</keyword>
<keyword id="KW-0472">Membrane</keyword>
<keyword id="KW-1185">Reference proteome</keyword>
<keyword id="KW-0812">Transmembrane</keyword>
<keyword id="KW-1133">Transmembrane helix</keyword>
<accession>Q5UQT8</accession>
<evidence type="ECO:0000255" key="1"/>
<evidence type="ECO:0000305" key="2"/>
<organism>
    <name type="scientific">Acanthamoeba polyphaga mimivirus</name>
    <name type="common">APMV</name>
    <dbReference type="NCBI Taxonomy" id="212035"/>
    <lineage>
        <taxon>Viruses</taxon>
        <taxon>Varidnaviria</taxon>
        <taxon>Bamfordvirae</taxon>
        <taxon>Nucleocytoviricota</taxon>
        <taxon>Megaviricetes</taxon>
        <taxon>Imitervirales</taxon>
        <taxon>Mimiviridae</taxon>
        <taxon>Megamimivirinae</taxon>
        <taxon>Mimivirus</taxon>
        <taxon>Mimivirus bradfordmassiliense</taxon>
    </lineage>
</organism>
<protein>
    <recommendedName>
        <fullName>Uncharacterized protein R342</fullName>
    </recommendedName>
</protein>
<dbReference type="EMBL" id="AY653733">
    <property type="protein sequence ID" value="AAV50611.1"/>
    <property type="molecule type" value="Genomic_DNA"/>
</dbReference>
<dbReference type="KEGG" id="vg:9924959"/>
<dbReference type="OrthoDB" id="35060at10239"/>
<dbReference type="Proteomes" id="UP000001134">
    <property type="component" value="Genome"/>
</dbReference>
<dbReference type="GO" id="GO:0016020">
    <property type="term" value="C:membrane"/>
    <property type="evidence" value="ECO:0007669"/>
    <property type="project" value="UniProtKB-SubCell"/>
</dbReference>
<comment type="subcellular location">
    <subcellularLocation>
        <location evidence="2">Membrane</location>
        <topology evidence="2">Multi-pass membrane protein</topology>
    </subcellularLocation>
</comment>
<name>YR342_MIMIV</name>
<feature type="chain" id="PRO_0000253422" description="Uncharacterized protein R342">
    <location>
        <begin position="1"/>
        <end position="255"/>
    </location>
</feature>
<feature type="transmembrane region" description="Helical" evidence="1">
    <location>
        <begin position="72"/>
        <end position="92"/>
    </location>
</feature>
<feature type="transmembrane region" description="Helical" evidence="1">
    <location>
        <begin position="104"/>
        <end position="124"/>
    </location>
</feature>
<feature type="glycosylation site" description="N-linked (GlcNAc...) asparagine; by host" evidence="1">
    <location>
        <position position="16"/>
    </location>
</feature>
<feature type="glycosylation site" description="N-linked (GlcNAc...) asparagine; by host" evidence="1">
    <location>
        <position position="58"/>
    </location>
</feature>